<accession>A7ST80</accession>
<name>SHKL4_NEMVE</name>
<dbReference type="EMBL" id="DS469791">
    <property type="protein sequence ID" value="EDO33083.1"/>
    <property type="molecule type" value="Genomic_DNA"/>
</dbReference>
<dbReference type="RefSeq" id="XP_001625183.1">
    <property type="nucleotide sequence ID" value="XM_001625133.1"/>
</dbReference>
<dbReference type="EnsemblMetazoa" id="EDO33083">
    <property type="protein sequence ID" value="EDO33083"/>
    <property type="gene ID" value="NEMVEDRAFT_v1g233578"/>
</dbReference>
<dbReference type="HOGENOM" id="CLU_2545286_0_0_1"/>
<dbReference type="InParanoid" id="A7ST80"/>
<dbReference type="Proteomes" id="UP000001593">
    <property type="component" value="Unassembled WGS sequence"/>
</dbReference>
<dbReference type="GO" id="GO:0007218">
    <property type="term" value="P:neuropeptide signaling pathway"/>
    <property type="evidence" value="ECO:0007669"/>
    <property type="project" value="UniProtKB-KW"/>
</dbReference>
<reference evidence="8 9" key="1">
    <citation type="journal article" date="2007" name="Science">
        <title>Sea anemone genome reveals ancestral eumetazoan gene repertoire and genomic organization.</title>
        <authorList>
            <person name="Putnam N.H."/>
            <person name="Srivastava M."/>
            <person name="Hellsten U."/>
            <person name="Dirks B."/>
            <person name="Chapman J."/>
            <person name="Salamov A."/>
            <person name="Terry A."/>
            <person name="Shapiro H."/>
            <person name="Lindquist E."/>
            <person name="Kapitonov V.V."/>
            <person name="Jurka J."/>
            <person name="Genikhovich G."/>
            <person name="Grigoriev I.V."/>
            <person name="Lucas S.M."/>
            <person name="Steele R.E."/>
            <person name="Finnerty J.R."/>
            <person name="Technau U."/>
            <person name="Martindale M.Q."/>
            <person name="Rokhsar D.S."/>
        </authorList>
    </citation>
    <scope>NUCLEOTIDE SEQUENCE [LARGE SCALE GENOMIC DNA]</scope>
    <source>
        <strain evidence="9">CH2 X CH6</strain>
    </source>
</reference>
<reference key="2">
    <citation type="journal article" date="2020" name="Proc. Natl. Acad. Sci. U.S.A.">
        <title>Toxin-like neuropeptides in the sea anemone Nematostella unravel recruitment from the nervous system to venom.</title>
        <authorList>
            <person name="Sachkova M.Y."/>
            <person name="Landau M."/>
            <person name="Surm J.M."/>
            <person name="Macrander J."/>
            <person name="Singer S.A."/>
            <person name="Reitzel A.M."/>
            <person name="Moran Y."/>
        </authorList>
    </citation>
    <scope>NUCLEOTIDE SEQUENCE [MRNA]</scope>
    <scope>PROTEIN SEQUENCE OF 31-43</scope>
    <scope>IDENTIFICATION BY MASS SPECTROMETRY</scope>
    <scope>TISSUE SPECIFICITY</scope>
    <scope>DEVELOPMENTAL STAGE</scope>
</reference>
<reference key="3">
    <citation type="journal article" date="2018" name="Development">
        <title>NvERTx: a gene expression database to compare embryogenesis and regeneration in the sea anemone Nematostella vectensis.</title>
        <authorList>
            <person name="Warner J.F."/>
            <person name="Guerlais V."/>
            <person name="Amiel A.R."/>
            <person name="Johnston H."/>
            <person name="Nedoncelle K."/>
            <person name="Roettinger E."/>
        </authorList>
    </citation>
    <scope>DEVELOPMENTAL STAGE</scope>
</reference>
<organism>
    <name type="scientific">Nematostella vectensis</name>
    <name type="common">Starlet sea anemone</name>
    <dbReference type="NCBI Taxonomy" id="45351"/>
    <lineage>
        <taxon>Eukaryota</taxon>
        <taxon>Metazoa</taxon>
        <taxon>Cnidaria</taxon>
        <taxon>Anthozoa</taxon>
        <taxon>Hexacorallia</taxon>
        <taxon>Actiniaria</taxon>
        <taxon>Edwardsiidae</taxon>
        <taxon>Nematostella</taxon>
    </lineage>
</organism>
<proteinExistence type="evidence at protein level"/>
<feature type="signal peptide" evidence="1">
    <location>
        <begin position="1"/>
        <end position="21"/>
    </location>
</feature>
<feature type="propeptide" id="PRO_0000453914" evidence="7">
    <location>
        <begin position="22"/>
        <end position="48"/>
    </location>
</feature>
<feature type="chain" id="PRO_0000453915" description="Protein ShK-like4" evidence="7">
    <location>
        <begin position="49"/>
        <end position="83"/>
    </location>
</feature>
<feature type="domain" description="ShKT" evidence="2">
    <location>
        <begin position="50"/>
        <end position="83"/>
    </location>
</feature>
<feature type="disulfide bond" evidence="2">
    <location>
        <begin position="50"/>
        <end position="82"/>
    </location>
</feature>
<feature type="disulfide bond" evidence="6">
    <location>
        <begin position="57"/>
        <end position="75"/>
    </location>
</feature>
<feature type="disulfide bond" evidence="2">
    <location>
        <begin position="67"/>
        <end position="79"/>
    </location>
</feature>
<keyword id="KW-0165">Cleavage on pair of basic residues</keyword>
<keyword id="KW-0903">Direct protein sequencing</keyword>
<keyword id="KW-1015">Disulfide bond</keyword>
<keyword id="KW-0527">Neuropeptide</keyword>
<keyword id="KW-1185">Reference proteome</keyword>
<keyword id="KW-0732">Signal</keyword>
<comment type="function">
    <text evidence="7">Probable neuropeptide.</text>
</comment>
<comment type="tissue specificity">
    <text evidence="4">Expressed in various neurons (ectodermal sensory cells) (in planulae and primary polyps). Not expressed in nematocytes.</text>
</comment>
<comment type="developmental stage">
    <text evidence="3 4">Very weakly detected in planulae, but moderately and equally detected in primary polyps (9d), and in both adult females and males (at protein level) (PubMed:33060291). Transcripts are expressed early in the life cycle and their expression is maintained through the adult stage (PubMed:29739837).</text>
</comment>
<comment type="PTM">
    <text evidence="6">Contains 3 disulfide bonds.</text>
</comment>
<protein>
    <recommendedName>
        <fullName evidence="5">Protein ShK-like4</fullName>
    </recommendedName>
</protein>
<sequence>MDTRVIAVLFVAIMVLSSTNALPKQKGSYKNMNHADFLKGLDRASSKRDCRDSHWSCFFQSNYEDICSTAQAEECALSCGLCE</sequence>
<evidence type="ECO:0000255" key="1"/>
<evidence type="ECO:0000255" key="2">
    <source>
        <dbReference type="PROSITE-ProRule" id="PRU01005"/>
    </source>
</evidence>
<evidence type="ECO:0000269" key="3">
    <source>
    </source>
</evidence>
<evidence type="ECO:0000269" key="4">
    <source>
    </source>
</evidence>
<evidence type="ECO:0000303" key="5">
    <source>
    </source>
</evidence>
<evidence type="ECO:0000305" key="6"/>
<evidence type="ECO:0000305" key="7">
    <source>
    </source>
</evidence>
<evidence type="ECO:0000312" key="8">
    <source>
        <dbReference type="EMBL" id="EDO33083.1"/>
    </source>
</evidence>
<evidence type="ECO:0000312" key="9">
    <source>
        <dbReference type="Proteomes" id="UP000001593"/>
    </source>
</evidence>